<gene>
    <name evidence="1" type="primary">atpH</name>
    <name type="ordered locus">CKL_3691</name>
</gene>
<protein>
    <recommendedName>
        <fullName evidence="1">ATP synthase subunit delta</fullName>
    </recommendedName>
    <alternativeName>
        <fullName evidence="1">ATP synthase F(1) sector subunit delta</fullName>
    </alternativeName>
    <alternativeName>
        <fullName evidence="1">F-type ATPase subunit delta</fullName>
        <shortName evidence="1">F-ATPase subunit delta</shortName>
    </alternativeName>
</protein>
<evidence type="ECO:0000255" key="1">
    <source>
        <dbReference type="HAMAP-Rule" id="MF_01416"/>
    </source>
</evidence>
<sequence length="181" mass="21208">MYEYLDRRYALALYKIAEEKGKVEEYLEELKDVTDIINNDTQFLEFIEHPEISTAEKKKTFINVFKGKISEDILSFLLILIDKGRINQLYSKLKEMGKIYLENHNTVIATVKTVIPLEDDERETLTEKLRRKFNKEVLIKEELDPEIIGGVYVEVNNMVIDGTVKSKLSEMKKIMLKGEQR</sequence>
<reference key="1">
    <citation type="journal article" date="2008" name="Proc. Natl. Acad. Sci. U.S.A.">
        <title>The genome of Clostridium kluyveri, a strict anaerobe with unique metabolic features.</title>
        <authorList>
            <person name="Seedorf H."/>
            <person name="Fricke W.F."/>
            <person name="Veith B."/>
            <person name="Brueggemann H."/>
            <person name="Liesegang H."/>
            <person name="Strittmatter A."/>
            <person name="Miethke M."/>
            <person name="Buckel W."/>
            <person name="Hinderberger J."/>
            <person name="Li F."/>
            <person name="Hagemeier C."/>
            <person name="Thauer R.K."/>
            <person name="Gottschalk G."/>
        </authorList>
    </citation>
    <scope>NUCLEOTIDE SEQUENCE [LARGE SCALE GENOMIC DNA]</scope>
    <source>
        <strain>ATCC 8527 / DSM 555 / NBRC 12016 / NCIMB 10680 / K1</strain>
    </source>
</reference>
<feature type="chain" id="PRO_1000184678" description="ATP synthase subunit delta">
    <location>
        <begin position="1"/>
        <end position="181"/>
    </location>
</feature>
<dbReference type="EMBL" id="CP000673">
    <property type="protein sequence ID" value="EDK35676.1"/>
    <property type="molecule type" value="Genomic_DNA"/>
</dbReference>
<dbReference type="RefSeq" id="WP_012104009.1">
    <property type="nucleotide sequence ID" value="NC_009706.1"/>
</dbReference>
<dbReference type="SMR" id="A5N3I0"/>
<dbReference type="STRING" id="431943.CKL_3691"/>
<dbReference type="KEGG" id="ckl:CKL_3691"/>
<dbReference type="eggNOG" id="COG0712">
    <property type="taxonomic scope" value="Bacteria"/>
</dbReference>
<dbReference type="HOGENOM" id="CLU_085114_4_0_9"/>
<dbReference type="Proteomes" id="UP000002411">
    <property type="component" value="Chromosome"/>
</dbReference>
<dbReference type="GO" id="GO:0005886">
    <property type="term" value="C:plasma membrane"/>
    <property type="evidence" value="ECO:0007669"/>
    <property type="project" value="UniProtKB-SubCell"/>
</dbReference>
<dbReference type="GO" id="GO:0045259">
    <property type="term" value="C:proton-transporting ATP synthase complex"/>
    <property type="evidence" value="ECO:0007669"/>
    <property type="project" value="UniProtKB-KW"/>
</dbReference>
<dbReference type="GO" id="GO:0046933">
    <property type="term" value="F:proton-transporting ATP synthase activity, rotational mechanism"/>
    <property type="evidence" value="ECO:0007669"/>
    <property type="project" value="UniProtKB-UniRule"/>
</dbReference>
<dbReference type="Gene3D" id="1.10.520.20">
    <property type="entry name" value="N-terminal domain of the delta subunit of the F1F0-ATP synthase"/>
    <property type="match status" value="1"/>
</dbReference>
<dbReference type="HAMAP" id="MF_01416">
    <property type="entry name" value="ATP_synth_delta_bact"/>
    <property type="match status" value="1"/>
</dbReference>
<dbReference type="InterPro" id="IPR026015">
    <property type="entry name" value="ATP_synth_OSCP/delta_N_sf"/>
</dbReference>
<dbReference type="InterPro" id="IPR020781">
    <property type="entry name" value="ATPase_OSCP/d_CS"/>
</dbReference>
<dbReference type="InterPro" id="IPR000711">
    <property type="entry name" value="ATPase_OSCP/dsu"/>
</dbReference>
<dbReference type="NCBIfam" id="TIGR01145">
    <property type="entry name" value="ATP_synt_delta"/>
    <property type="match status" value="1"/>
</dbReference>
<dbReference type="NCBIfam" id="NF004403">
    <property type="entry name" value="PRK05758.2-4"/>
    <property type="match status" value="1"/>
</dbReference>
<dbReference type="PANTHER" id="PTHR11910">
    <property type="entry name" value="ATP SYNTHASE DELTA CHAIN"/>
    <property type="match status" value="1"/>
</dbReference>
<dbReference type="Pfam" id="PF00213">
    <property type="entry name" value="OSCP"/>
    <property type="match status" value="1"/>
</dbReference>
<dbReference type="PRINTS" id="PR00125">
    <property type="entry name" value="ATPASEDELTA"/>
</dbReference>
<dbReference type="SUPFAM" id="SSF47928">
    <property type="entry name" value="N-terminal domain of the delta subunit of the F1F0-ATP synthase"/>
    <property type="match status" value="1"/>
</dbReference>
<dbReference type="PROSITE" id="PS00389">
    <property type="entry name" value="ATPASE_DELTA"/>
    <property type="match status" value="1"/>
</dbReference>
<name>ATPD_CLOK5</name>
<proteinExistence type="inferred from homology"/>
<keyword id="KW-0066">ATP synthesis</keyword>
<keyword id="KW-1003">Cell membrane</keyword>
<keyword id="KW-0139">CF(1)</keyword>
<keyword id="KW-0375">Hydrogen ion transport</keyword>
<keyword id="KW-0406">Ion transport</keyword>
<keyword id="KW-0472">Membrane</keyword>
<keyword id="KW-1185">Reference proteome</keyword>
<keyword id="KW-0813">Transport</keyword>
<accession>A5N3I0</accession>
<comment type="function">
    <text evidence="1">F(1)F(0) ATP synthase produces ATP from ADP in the presence of a proton or sodium gradient. F-type ATPases consist of two structural domains, F(1) containing the extramembraneous catalytic core and F(0) containing the membrane proton channel, linked together by a central stalk and a peripheral stalk. During catalysis, ATP synthesis in the catalytic domain of F(1) is coupled via a rotary mechanism of the central stalk subunits to proton translocation.</text>
</comment>
<comment type="function">
    <text evidence="1">This protein is part of the stalk that links CF(0) to CF(1). It either transmits conformational changes from CF(0) to CF(1) or is implicated in proton conduction.</text>
</comment>
<comment type="subunit">
    <text evidence="1">F-type ATPases have 2 components, F(1) - the catalytic core - and F(0) - the membrane proton channel. F(1) has five subunits: alpha(3), beta(3), gamma(1), delta(1), epsilon(1). F(0) has three main subunits: a(1), b(2) and c(10-14). The alpha and beta chains form an alternating ring which encloses part of the gamma chain. F(1) is attached to F(0) by a central stalk formed by the gamma and epsilon chains, while a peripheral stalk is formed by the delta and b chains.</text>
</comment>
<comment type="subcellular location">
    <subcellularLocation>
        <location evidence="1">Cell membrane</location>
        <topology evidence="1">Peripheral membrane protein</topology>
    </subcellularLocation>
</comment>
<comment type="similarity">
    <text evidence="1">Belongs to the ATPase delta chain family.</text>
</comment>
<organism>
    <name type="scientific">Clostridium kluyveri (strain ATCC 8527 / DSM 555 / NBRC 12016 / NCIMB 10680 / K1)</name>
    <dbReference type="NCBI Taxonomy" id="431943"/>
    <lineage>
        <taxon>Bacteria</taxon>
        <taxon>Bacillati</taxon>
        <taxon>Bacillota</taxon>
        <taxon>Clostridia</taxon>
        <taxon>Eubacteriales</taxon>
        <taxon>Clostridiaceae</taxon>
        <taxon>Clostridium</taxon>
    </lineage>
</organism>